<evidence type="ECO:0000250" key="1"/>
<evidence type="ECO:0000305" key="2"/>
<protein>
    <recommendedName>
        <fullName>Aspartoacylase</fullName>
        <ecNumber>3.5.1.15</ecNumber>
    </recommendedName>
    <alternativeName>
        <fullName>Aminoacylase-2</fullName>
        <shortName>ACY-2</shortName>
    </alternativeName>
</protein>
<name>ACY2_DANRE</name>
<organism>
    <name type="scientific">Danio rerio</name>
    <name type="common">Zebrafish</name>
    <name type="synonym">Brachydanio rerio</name>
    <dbReference type="NCBI Taxonomy" id="7955"/>
    <lineage>
        <taxon>Eukaryota</taxon>
        <taxon>Metazoa</taxon>
        <taxon>Chordata</taxon>
        <taxon>Craniata</taxon>
        <taxon>Vertebrata</taxon>
        <taxon>Euteleostomi</taxon>
        <taxon>Actinopterygii</taxon>
        <taxon>Neopterygii</taxon>
        <taxon>Teleostei</taxon>
        <taxon>Ostariophysi</taxon>
        <taxon>Cypriniformes</taxon>
        <taxon>Danionidae</taxon>
        <taxon>Danioninae</taxon>
        <taxon>Danio</taxon>
    </lineage>
</organism>
<gene>
    <name type="primary">aspa</name>
    <name type="ORF">zgc:171507</name>
</gene>
<feature type="chain" id="PRO_0000363360" description="Aspartoacylase">
    <location>
        <begin position="1"/>
        <end position="315"/>
    </location>
</feature>
<feature type="active site" evidence="1">
    <location>
        <position position="180"/>
    </location>
</feature>
<feature type="binding site" evidence="1">
    <location>
        <position position="23"/>
    </location>
    <ligand>
        <name>Zn(2+)</name>
        <dbReference type="ChEBI" id="CHEBI:29105"/>
    </ligand>
</feature>
<feature type="binding site" evidence="1">
    <location>
        <position position="26"/>
    </location>
    <ligand>
        <name>Zn(2+)</name>
        <dbReference type="ChEBI" id="CHEBI:29105"/>
    </ligand>
</feature>
<feature type="binding site" evidence="1">
    <location>
        <position position="65"/>
    </location>
    <ligand>
        <name>substrate</name>
    </ligand>
</feature>
<feature type="binding site" evidence="1">
    <location>
        <begin position="72"/>
        <end position="73"/>
    </location>
    <ligand>
        <name>substrate</name>
    </ligand>
</feature>
<feature type="binding site" evidence="1">
    <location>
        <position position="118"/>
    </location>
    <ligand>
        <name>Zn(2+)</name>
        <dbReference type="ChEBI" id="CHEBI:29105"/>
    </ligand>
</feature>
<feature type="binding site" evidence="1">
    <location>
        <begin position="166"/>
        <end position="170"/>
    </location>
    <ligand>
        <name>substrate</name>
    </ligand>
</feature>
<feature type="binding site" evidence="1">
    <location>
        <position position="180"/>
    </location>
    <ligand>
        <name>substrate</name>
    </ligand>
</feature>
<feature type="binding site" evidence="1">
    <location>
        <position position="290"/>
    </location>
    <ligand>
        <name>substrate</name>
    </ligand>
</feature>
<sequence length="315" mass="35535">MSSRTNISCLQEAKRVAIFGGTHGNEMSGIVLANMWIQNATEIERKGLVCKPFITNPRAVEKCTRYIDTDLNRAFTPENLSASELEALPYEVQRAKEINQMFGPKGGSDAYDVIFDLHNTTSNMGSTLILESSTDLFNLQMVHYIKKAMAPHTCSVLLNEHPQLKYSTTRSVAKHPVGLEVGPQPQGVLRSNVFESMRTILKHALDFIELFNNGVEFPPCTVNVFRVQERMDYPRDTNGNITAMVHPHLQDCDWEPLNRGDPMFLTFDGRTILYEGANTVYPTFINEAAYYEKQQAFVTTCREILAANAIRKAFK</sequence>
<reference key="1">
    <citation type="submission" date="2007-10" db="EMBL/GenBank/DDBJ databases">
        <authorList>
            <consortium name="NIH - Zebrafish Gene Collection (ZGC) project"/>
        </authorList>
    </citation>
    <scope>NUCLEOTIDE SEQUENCE [LARGE SCALE MRNA]</scope>
    <source>
        <tissue>Olfactory epithelium</tissue>
    </source>
</reference>
<comment type="function">
    <text evidence="1">Catalyzes the deacetylation of N-acetylaspartic acid (NAA) to produce acetate and L-aspartate.</text>
</comment>
<comment type="catalytic activity">
    <reaction>
        <text>an N-acyl-L-aspartate + H2O = a carboxylate + L-aspartate</text>
        <dbReference type="Rhea" id="RHEA:10872"/>
        <dbReference type="ChEBI" id="CHEBI:15377"/>
        <dbReference type="ChEBI" id="CHEBI:29067"/>
        <dbReference type="ChEBI" id="CHEBI:29991"/>
        <dbReference type="ChEBI" id="CHEBI:58497"/>
        <dbReference type="EC" id="3.5.1.15"/>
    </reaction>
</comment>
<comment type="cofactor">
    <cofactor evidence="1">
        <name>Zn(2+)</name>
        <dbReference type="ChEBI" id="CHEBI:29105"/>
    </cofactor>
    <text evidence="1">Binds 1 zinc ion per subunit.</text>
</comment>
<comment type="subcellular location">
    <subcellularLocation>
        <location>Cytoplasm</location>
    </subcellularLocation>
    <subcellularLocation>
        <location evidence="1">Nucleus</location>
    </subcellularLocation>
</comment>
<comment type="similarity">
    <text evidence="2">Belongs to the AspA/AstE family. Aspartoacylase subfamily.</text>
</comment>
<accession>A8KB34</accession>
<proteinExistence type="evidence at transcript level"/>
<keyword id="KW-0963">Cytoplasm</keyword>
<keyword id="KW-0378">Hydrolase</keyword>
<keyword id="KW-0479">Metal-binding</keyword>
<keyword id="KW-0539">Nucleus</keyword>
<keyword id="KW-1185">Reference proteome</keyword>
<keyword id="KW-0862">Zinc</keyword>
<dbReference type="EC" id="3.5.1.15"/>
<dbReference type="EMBL" id="BC153945">
    <property type="protein sequence ID" value="AAI53946.1"/>
    <property type="molecule type" value="mRNA"/>
</dbReference>
<dbReference type="RefSeq" id="NP_001103573.1">
    <property type="nucleotide sequence ID" value="NM_001110103.1"/>
</dbReference>
<dbReference type="SMR" id="A8KB34"/>
<dbReference type="FunCoup" id="A8KB34">
    <property type="interactions" value="515"/>
</dbReference>
<dbReference type="STRING" id="7955.ENSDARP00000068606"/>
<dbReference type="PaxDb" id="7955-ENSDARP00000068606"/>
<dbReference type="Ensembl" id="ENSDART00000074117">
    <property type="protein sequence ID" value="ENSDARP00000068606"/>
    <property type="gene ID" value="ENSDARG00000005154"/>
</dbReference>
<dbReference type="GeneID" id="557232"/>
<dbReference type="KEGG" id="dre:557232"/>
<dbReference type="AGR" id="ZFIN:ZDB-GENE-080204-11"/>
<dbReference type="CTD" id="443"/>
<dbReference type="ZFIN" id="ZDB-GENE-080204-11">
    <property type="gene designation" value="aspa"/>
</dbReference>
<dbReference type="eggNOG" id="ENOG502QRAK">
    <property type="taxonomic scope" value="Eukaryota"/>
</dbReference>
<dbReference type="HOGENOM" id="CLU_083292_0_0_1"/>
<dbReference type="InParanoid" id="A8KB34"/>
<dbReference type="OMA" id="THGNEIN"/>
<dbReference type="OrthoDB" id="8300214at2759"/>
<dbReference type="PhylomeDB" id="A8KB34"/>
<dbReference type="TreeFam" id="TF328708"/>
<dbReference type="Reactome" id="R-DRE-8963693">
    <property type="pathway name" value="Aspartate and asparagine metabolism"/>
</dbReference>
<dbReference type="PRO" id="PR:A8KB34"/>
<dbReference type="Proteomes" id="UP000000437">
    <property type="component" value="Chromosome 5"/>
</dbReference>
<dbReference type="Bgee" id="ENSDARG00000005154">
    <property type="expression patterns" value="Expressed in retina and 19 other cell types or tissues"/>
</dbReference>
<dbReference type="ExpressionAtlas" id="A8KB34">
    <property type="expression patterns" value="baseline and differential"/>
</dbReference>
<dbReference type="GO" id="GO:0005829">
    <property type="term" value="C:cytosol"/>
    <property type="evidence" value="ECO:0000318"/>
    <property type="project" value="GO_Central"/>
</dbReference>
<dbReference type="GO" id="GO:0005634">
    <property type="term" value="C:nucleus"/>
    <property type="evidence" value="ECO:0007669"/>
    <property type="project" value="UniProtKB-SubCell"/>
</dbReference>
<dbReference type="GO" id="GO:0019807">
    <property type="term" value="F:aspartoacylase activity"/>
    <property type="evidence" value="ECO:0007669"/>
    <property type="project" value="UniProtKB-EC"/>
</dbReference>
<dbReference type="GO" id="GO:0016811">
    <property type="term" value="F:hydrolase activity, acting on carbon-nitrogen (but not peptide) bonds, in linear amides"/>
    <property type="evidence" value="ECO:0000318"/>
    <property type="project" value="GO_Central"/>
</dbReference>
<dbReference type="GO" id="GO:0016788">
    <property type="term" value="F:hydrolase activity, acting on ester bonds"/>
    <property type="evidence" value="ECO:0007669"/>
    <property type="project" value="InterPro"/>
</dbReference>
<dbReference type="GO" id="GO:0046872">
    <property type="term" value="F:metal ion binding"/>
    <property type="evidence" value="ECO:0007669"/>
    <property type="project" value="UniProtKB-KW"/>
</dbReference>
<dbReference type="CDD" id="cd06909">
    <property type="entry name" value="M14_ASPA"/>
    <property type="match status" value="1"/>
</dbReference>
<dbReference type="FunFam" id="2.20.25.160:FF:000001">
    <property type="entry name" value="Aspartoacylase"/>
    <property type="match status" value="1"/>
</dbReference>
<dbReference type="FunFam" id="3.40.630.10:FF:000025">
    <property type="entry name" value="aspartoacylase"/>
    <property type="match status" value="1"/>
</dbReference>
<dbReference type="Gene3D" id="2.20.25.160">
    <property type="match status" value="1"/>
</dbReference>
<dbReference type="Gene3D" id="3.40.630.10">
    <property type="entry name" value="Zn peptidases"/>
    <property type="match status" value="1"/>
</dbReference>
<dbReference type="HAMAP" id="MF_00704">
    <property type="entry name" value="Aspartoacylase"/>
    <property type="match status" value="1"/>
</dbReference>
<dbReference type="InterPro" id="IPR050178">
    <property type="entry name" value="AspA/AstE_fam"/>
</dbReference>
<dbReference type="InterPro" id="IPR016708">
    <property type="entry name" value="Aspartoacylase"/>
</dbReference>
<dbReference type="InterPro" id="IPR055438">
    <property type="entry name" value="AstE_AspA_cat"/>
</dbReference>
<dbReference type="InterPro" id="IPR007036">
    <property type="entry name" value="Aste_AspA_hybrid_dom"/>
</dbReference>
<dbReference type="NCBIfam" id="NF002601">
    <property type="entry name" value="PRK02259.1"/>
    <property type="match status" value="1"/>
</dbReference>
<dbReference type="PANTHER" id="PTHR15162">
    <property type="entry name" value="ASPARTOACYLASE"/>
    <property type="match status" value="1"/>
</dbReference>
<dbReference type="PANTHER" id="PTHR15162:SF9">
    <property type="entry name" value="ASPARTOACYLASE"/>
    <property type="match status" value="1"/>
</dbReference>
<dbReference type="Pfam" id="PF24827">
    <property type="entry name" value="AstE_AspA_cat"/>
    <property type="match status" value="1"/>
</dbReference>
<dbReference type="Pfam" id="PF04952">
    <property type="entry name" value="AstE_AspA_hybrid"/>
    <property type="match status" value="1"/>
</dbReference>
<dbReference type="PIRSF" id="PIRSF018001">
    <property type="entry name" value="Aspartoacylase"/>
    <property type="match status" value="1"/>
</dbReference>
<dbReference type="SUPFAM" id="SSF53187">
    <property type="entry name" value="Zn-dependent exopeptidases"/>
    <property type="match status" value="1"/>
</dbReference>